<organism>
    <name type="scientific">Flavobacterium johnsoniae (strain ATCC 17061 / DSM 2064 / JCM 8514 / BCRC 14874 / CCUG 350202 / NBRC 14942 / NCIMB 11054 / UW101)</name>
    <name type="common">Cytophaga johnsonae</name>
    <dbReference type="NCBI Taxonomy" id="376686"/>
    <lineage>
        <taxon>Bacteria</taxon>
        <taxon>Pseudomonadati</taxon>
        <taxon>Bacteroidota</taxon>
        <taxon>Flavobacteriia</taxon>
        <taxon>Flavobacteriales</taxon>
        <taxon>Flavobacteriaceae</taxon>
        <taxon>Flavobacterium</taxon>
    </lineage>
</organism>
<dbReference type="EMBL" id="CP000685">
    <property type="protein sequence ID" value="ABQ04973.1"/>
    <property type="molecule type" value="Genomic_DNA"/>
</dbReference>
<dbReference type="RefSeq" id="WP_012024014.1">
    <property type="nucleotide sequence ID" value="NZ_MUGZ01000012.1"/>
</dbReference>
<dbReference type="SMR" id="A5FIJ1"/>
<dbReference type="STRING" id="376686.Fjoh_1941"/>
<dbReference type="KEGG" id="fjo:Fjoh_1941"/>
<dbReference type="eggNOG" id="COG0244">
    <property type="taxonomic scope" value="Bacteria"/>
</dbReference>
<dbReference type="HOGENOM" id="CLU_092227_3_0_10"/>
<dbReference type="OrthoDB" id="1523686at2"/>
<dbReference type="Proteomes" id="UP000006694">
    <property type="component" value="Chromosome"/>
</dbReference>
<dbReference type="GO" id="GO:1990904">
    <property type="term" value="C:ribonucleoprotein complex"/>
    <property type="evidence" value="ECO:0007669"/>
    <property type="project" value="UniProtKB-KW"/>
</dbReference>
<dbReference type="GO" id="GO:0005840">
    <property type="term" value="C:ribosome"/>
    <property type="evidence" value="ECO:0007669"/>
    <property type="project" value="UniProtKB-KW"/>
</dbReference>
<dbReference type="GO" id="GO:0070180">
    <property type="term" value="F:large ribosomal subunit rRNA binding"/>
    <property type="evidence" value="ECO:0007669"/>
    <property type="project" value="UniProtKB-UniRule"/>
</dbReference>
<dbReference type="GO" id="GO:0006412">
    <property type="term" value="P:translation"/>
    <property type="evidence" value="ECO:0007669"/>
    <property type="project" value="UniProtKB-UniRule"/>
</dbReference>
<dbReference type="CDD" id="cd05797">
    <property type="entry name" value="Ribosomal_L10"/>
    <property type="match status" value="1"/>
</dbReference>
<dbReference type="Gene3D" id="3.30.70.1730">
    <property type="match status" value="1"/>
</dbReference>
<dbReference type="HAMAP" id="MF_00362">
    <property type="entry name" value="Ribosomal_uL10"/>
    <property type="match status" value="1"/>
</dbReference>
<dbReference type="InterPro" id="IPR001790">
    <property type="entry name" value="Ribosomal_uL10"/>
</dbReference>
<dbReference type="InterPro" id="IPR043141">
    <property type="entry name" value="Ribosomal_uL10-like_sf"/>
</dbReference>
<dbReference type="InterPro" id="IPR022973">
    <property type="entry name" value="Ribosomal_uL10_bac"/>
</dbReference>
<dbReference type="InterPro" id="IPR047865">
    <property type="entry name" value="Ribosomal_uL10_bac_type"/>
</dbReference>
<dbReference type="NCBIfam" id="NF000955">
    <property type="entry name" value="PRK00099.1-1"/>
    <property type="match status" value="1"/>
</dbReference>
<dbReference type="PANTHER" id="PTHR11560">
    <property type="entry name" value="39S RIBOSOMAL PROTEIN L10, MITOCHONDRIAL"/>
    <property type="match status" value="1"/>
</dbReference>
<dbReference type="Pfam" id="PF00466">
    <property type="entry name" value="Ribosomal_L10"/>
    <property type="match status" value="1"/>
</dbReference>
<dbReference type="SUPFAM" id="SSF160369">
    <property type="entry name" value="Ribosomal protein L10-like"/>
    <property type="match status" value="1"/>
</dbReference>
<name>RL10_FLAJ1</name>
<gene>
    <name evidence="1" type="primary">rplJ</name>
    <name type="ordered locus">Fjoh_1941</name>
</gene>
<reference key="1">
    <citation type="journal article" date="2009" name="Appl. Environ. Microbiol.">
        <title>Novel features of the polysaccharide-digesting gliding bacterium Flavobacterium johnsoniae as revealed by genome sequence analysis.</title>
        <authorList>
            <person name="McBride M.J."/>
            <person name="Xie G."/>
            <person name="Martens E.C."/>
            <person name="Lapidus A."/>
            <person name="Henrissat B."/>
            <person name="Rhodes R.G."/>
            <person name="Goltsman E."/>
            <person name="Wang W."/>
            <person name="Xu J."/>
            <person name="Hunnicutt D.W."/>
            <person name="Staroscik A.M."/>
            <person name="Hoover T.R."/>
            <person name="Cheng Y.Q."/>
            <person name="Stein J.L."/>
        </authorList>
    </citation>
    <scope>NUCLEOTIDE SEQUENCE [LARGE SCALE GENOMIC DNA]</scope>
    <source>
        <strain>ATCC 17061 / DSM 2064 / JCM 8514 / BCRC 14874 / CCUG 350202 / NBRC 14942 / NCIMB 11054 / UW101</strain>
    </source>
</reference>
<protein>
    <recommendedName>
        <fullName evidence="1">Large ribosomal subunit protein uL10</fullName>
    </recommendedName>
    <alternativeName>
        <fullName evidence="2">50S ribosomal protein L10</fullName>
    </alternativeName>
</protein>
<comment type="function">
    <text evidence="1">Forms part of the ribosomal stalk, playing a central role in the interaction of the ribosome with GTP-bound translation factors.</text>
</comment>
<comment type="subunit">
    <text evidence="1">Part of the ribosomal stalk of the 50S ribosomal subunit. The N-terminus interacts with L11 and the large rRNA to form the base of the stalk. The C-terminus forms an elongated spine to which L12 dimers bind in a sequential fashion forming a multimeric L10(L12)X complex.</text>
</comment>
<comment type="similarity">
    <text evidence="1">Belongs to the universal ribosomal protein uL10 family.</text>
</comment>
<sequence length="167" mass="17918">MTREEKSIAIENLTAQLAGTNIIYISDISGLNAETTSNLRRACFKAGIKLEVVKNTLLAKAMEASSNDYGDLPTVLSGNSAIFISDVANAPGKIIKDFRKKSDKPVLKGAYINSEVYIGDNQLDALATIKSKEELIGEIIGLLQSPAQRIISALQNKFAGSEEEGAE</sequence>
<proteinExistence type="inferred from homology"/>
<evidence type="ECO:0000255" key="1">
    <source>
        <dbReference type="HAMAP-Rule" id="MF_00362"/>
    </source>
</evidence>
<evidence type="ECO:0000305" key="2"/>
<feature type="chain" id="PRO_1000120964" description="Large ribosomal subunit protein uL10">
    <location>
        <begin position="1"/>
        <end position="167"/>
    </location>
</feature>
<accession>A5FIJ1</accession>
<keyword id="KW-0687">Ribonucleoprotein</keyword>
<keyword id="KW-0689">Ribosomal protein</keyword>
<keyword id="KW-0694">RNA-binding</keyword>
<keyword id="KW-0699">rRNA-binding</keyword>